<feature type="chain" id="PRO_0000250794" description="NAD(P)H-quinone oxidoreductase subunit I, chloroplastic">
    <location>
        <begin position="1"/>
        <end position="166"/>
    </location>
</feature>
<feature type="domain" description="4Fe-4S ferredoxin-type 1" evidence="1">
    <location>
        <begin position="55"/>
        <end position="84"/>
    </location>
</feature>
<feature type="domain" description="4Fe-4S ferredoxin-type 2" evidence="1">
    <location>
        <begin position="95"/>
        <end position="124"/>
    </location>
</feature>
<feature type="binding site" evidence="1">
    <location>
        <position position="64"/>
    </location>
    <ligand>
        <name>[4Fe-4S] cluster</name>
        <dbReference type="ChEBI" id="CHEBI:49883"/>
        <label>1</label>
    </ligand>
</feature>
<feature type="binding site" evidence="1">
    <location>
        <position position="67"/>
    </location>
    <ligand>
        <name>[4Fe-4S] cluster</name>
        <dbReference type="ChEBI" id="CHEBI:49883"/>
        <label>1</label>
    </ligand>
</feature>
<feature type="binding site" evidence="1">
    <location>
        <position position="70"/>
    </location>
    <ligand>
        <name>[4Fe-4S] cluster</name>
        <dbReference type="ChEBI" id="CHEBI:49883"/>
        <label>1</label>
    </ligand>
</feature>
<feature type="binding site" evidence="1">
    <location>
        <position position="74"/>
    </location>
    <ligand>
        <name>[4Fe-4S] cluster</name>
        <dbReference type="ChEBI" id="CHEBI:49883"/>
        <label>2</label>
    </ligand>
</feature>
<feature type="binding site" evidence="1">
    <location>
        <position position="104"/>
    </location>
    <ligand>
        <name>[4Fe-4S] cluster</name>
        <dbReference type="ChEBI" id="CHEBI:49883"/>
        <label>2</label>
    </ligand>
</feature>
<feature type="binding site" evidence="1">
    <location>
        <position position="107"/>
    </location>
    <ligand>
        <name>[4Fe-4S] cluster</name>
        <dbReference type="ChEBI" id="CHEBI:49883"/>
        <label>2</label>
    </ligand>
</feature>
<feature type="binding site" evidence="1">
    <location>
        <position position="110"/>
    </location>
    <ligand>
        <name>[4Fe-4S] cluster</name>
        <dbReference type="ChEBI" id="CHEBI:49883"/>
        <label>2</label>
    </ligand>
</feature>
<feature type="binding site" evidence="1">
    <location>
        <position position="114"/>
    </location>
    <ligand>
        <name>[4Fe-4S] cluster</name>
        <dbReference type="ChEBI" id="CHEBI:49883"/>
        <label>1</label>
    </ligand>
</feature>
<keyword id="KW-0004">4Fe-4S</keyword>
<keyword id="KW-0150">Chloroplast</keyword>
<keyword id="KW-0408">Iron</keyword>
<keyword id="KW-0411">Iron-sulfur</keyword>
<keyword id="KW-0472">Membrane</keyword>
<keyword id="KW-0479">Metal-binding</keyword>
<keyword id="KW-0520">NAD</keyword>
<keyword id="KW-0521">NADP</keyword>
<keyword id="KW-0934">Plastid</keyword>
<keyword id="KW-0618">Plastoquinone</keyword>
<keyword id="KW-0874">Quinone</keyword>
<keyword id="KW-0677">Repeat</keyword>
<keyword id="KW-0793">Thylakoid</keyword>
<keyword id="KW-1278">Translocase</keyword>
<gene>
    <name evidence="1" type="primary">ndhI</name>
</gene>
<protein>
    <recommendedName>
        <fullName evidence="1">NAD(P)H-quinone oxidoreductase subunit I, chloroplastic</fullName>
        <ecNumber evidence="1">7.1.1.-</ecNumber>
    </recommendedName>
    <alternativeName>
        <fullName evidence="1">NAD(P)H dehydrogenase subunit I</fullName>
        <shortName evidence="1">NDH subunit I</shortName>
    </alternativeName>
    <alternativeName>
        <fullName evidence="1">NADH-plastoquinone oxidoreductase subunit I</fullName>
    </alternativeName>
</protein>
<comment type="function">
    <text evidence="1">NDH shuttles electrons from NAD(P)H:plastoquinone, via FMN and iron-sulfur (Fe-S) centers, to quinones in the photosynthetic chain and possibly in a chloroplast respiratory chain. The immediate electron acceptor for the enzyme in this species is believed to be plastoquinone. Couples the redox reaction to proton translocation, and thus conserves the redox energy in a proton gradient.</text>
</comment>
<comment type="catalytic activity">
    <reaction evidence="1">
        <text>a plastoquinone + NADH + (n+1) H(+)(in) = a plastoquinol + NAD(+) + n H(+)(out)</text>
        <dbReference type="Rhea" id="RHEA:42608"/>
        <dbReference type="Rhea" id="RHEA-COMP:9561"/>
        <dbReference type="Rhea" id="RHEA-COMP:9562"/>
        <dbReference type="ChEBI" id="CHEBI:15378"/>
        <dbReference type="ChEBI" id="CHEBI:17757"/>
        <dbReference type="ChEBI" id="CHEBI:57540"/>
        <dbReference type="ChEBI" id="CHEBI:57945"/>
        <dbReference type="ChEBI" id="CHEBI:62192"/>
    </reaction>
</comment>
<comment type="catalytic activity">
    <reaction evidence="1">
        <text>a plastoquinone + NADPH + (n+1) H(+)(in) = a plastoquinol + NADP(+) + n H(+)(out)</text>
        <dbReference type="Rhea" id="RHEA:42612"/>
        <dbReference type="Rhea" id="RHEA-COMP:9561"/>
        <dbReference type="Rhea" id="RHEA-COMP:9562"/>
        <dbReference type="ChEBI" id="CHEBI:15378"/>
        <dbReference type="ChEBI" id="CHEBI:17757"/>
        <dbReference type="ChEBI" id="CHEBI:57783"/>
        <dbReference type="ChEBI" id="CHEBI:58349"/>
        <dbReference type="ChEBI" id="CHEBI:62192"/>
    </reaction>
</comment>
<comment type="cofactor">
    <cofactor evidence="1">
        <name>[4Fe-4S] cluster</name>
        <dbReference type="ChEBI" id="CHEBI:49883"/>
    </cofactor>
    <text evidence="1">Binds 2 [4Fe-4S] clusters per subunit.</text>
</comment>
<comment type="subunit">
    <text evidence="1">NDH is composed of at least 16 different subunits, 5 of which are encoded in the nucleus.</text>
</comment>
<comment type="subcellular location">
    <subcellularLocation>
        <location evidence="1">Plastid</location>
        <location evidence="1">Chloroplast thylakoid membrane</location>
        <topology evidence="1">Peripheral membrane protein</topology>
    </subcellularLocation>
</comment>
<comment type="similarity">
    <text evidence="1">Belongs to the complex I 23 kDa subunit family.</text>
</comment>
<organism>
    <name type="scientific">Guardiola tulocarpus</name>
    <dbReference type="NCBI Taxonomy" id="176604"/>
    <lineage>
        <taxon>Eukaryota</taxon>
        <taxon>Viridiplantae</taxon>
        <taxon>Streptophyta</taxon>
        <taxon>Embryophyta</taxon>
        <taxon>Tracheophyta</taxon>
        <taxon>Spermatophyta</taxon>
        <taxon>Magnoliopsida</taxon>
        <taxon>eudicotyledons</taxon>
        <taxon>Gunneridae</taxon>
        <taxon>Pentapetalae</taxon>
        <taxon>asterids</taxon>
        <taxon>campanulids</taxon>
        <taxon>Asterales</taxon>
        <taxon>Asteraceae</taxon>
        <taxon>Asteroideae</taxon>
        <taxon>Heliantheae alliance</taxon>
        <taxon>Madieae</taxon>
        <taxon>Guardiolinae</taxon>
        <taxon>Guardiola</taxon>
    </lineage>
</organism>
<reference key="1">
    <citation type="submission" date="2003-01" db="EMBL/GenBank/DDBJ databases">
        <title>Chloroplast DNA phylogeny of tribe Heliantheae (Asteraceae).</title>
        <authorList>
            <person name="Panero J.L."/>
            <person name="Baldwin B.G."/>
            <person name="Schilling E.E."/>
            <person name="Clevinger J.A."/>
        </authorList>
    </citation>
    <scope>NUCLEOTIDE SEQUENCE [GENOMIC DNA]</scope>
</reference>
<dbReference type="EC" id="7.1.1.-" evidence="1"/>
<dbReference type="EMBL" id="AF383794">
    <property type="protein sequence ID" value="AAN61735.1"/>
    <property type="molecule type" value="Genomic_DNA"/>
</dbReference>
<dbReference type="RefSeq" id="YP_010923710.1">
    <property type="nucleotide sequence ID" value="NC_081936.1"/>
</dbReference>
<dbReference type="SMR" id="Q8HVR9"/>
<dbReference type="GeneID" id="84334755"/>
<dbReference type="GO" id="GO:0009535">
    <property type="term" value="C:chloroplast thylakoid membrane"/>
    <property type="evidence" value="ECO:0007669"/>
    <property type="project" value="UniProtKB-SubCell"/>
</dbReference>
<dbReference type="GO" id="GO:0051539">
    <property type="term" value="F:4 iron, 4 sulfur cluster binding"/>
    <property type="evidence" value="ECO:0007669"/>
    <property type="project" value="UniProtKB-KW"/>
</dbReference>
<dbReference type="GO" id="GO:0005506">
    <property type="term" value="F:iron ion binding"/>
    <property type="evidence" value="ECO:0007669"/>
    <property type="project" value="UniProtKB-UniRule"/>
</dbReference>
<dbReference type="GO" id="GO:0008137">
    <property type="term" value="F:NADH dehydrogenase (ubiquinone) activity"/>
    <property type="evidence" value="ECO:0007669"/>
    <property type="project" value="InterPro"/>
</dbReference>
<dbReference type="GO" id="GO:0048038">
    <property type="term" value="F:quinone binding"/>
    <property type="evidence" value="ECO:0007669"/>
    <property type="project" value="UniProtKB-KW"/>
</dbReference>
<dbReference type="GO" id="GO:0019684">
    <property type="term" value="P:photosynthesis, light reaction"/>
    <property type="evidence" value="ECO:0007669"/>
    <property type="project" value="UniProtKB-UniRule"/>
</dbReference>
<dbReference type="FunFam" id="3.30.70.3270:FF:000006">
    <property type="entry name" value="NAD(P)H-quinone oxidoreductase subunit I, chloroplastic"/>
    <property type="match status" value="1"/>
</dbReference>
<dbReference type="Gene3D" id="3.30.70.3270">
    <property type="match status" value="1"/>
</dbReference>
<dbReference type="HAMAP" id="MF_01351">
    <property type="entry name" value="NDH1_NuoI"/>
    <property type="match status" value="1"/>
</dbReference>
<dbReference type="InterPro" id="IPR017896">
    <property type="entry name" value="4Fe4S_Fe-S-bd"/>
</dbReference>
<dbReference type="InterPro" id="IPR017900">
    <property type="entry name" value="4Fe4S_Fe_S_CS"/>
</dbReference>
<dbReference type="InterPro" id="IPR010226">
    <property type="entry name" value="NADH_quinone_OxRdtase_chainI"/>
</dbReference>
<dbReference type="InterPro" id="IPR004497">
    <property type="entry name" value="NDHI"/>
</dbReference>
<dbReference type="NCBIfam" id="TIGR00403">
    <property type="entry name" value="ndhI"/>
    <property type="match status" value="1"/>
</dbReference>
<dbReference type="NCBIfam" id="TIGR01971">
    <property type="entry name" value="NuoI"/>
    <property type="match status" value="1"/>
</dbReference>
<dbReference type="NCBIfam" id="NF004537">
    <property type="entry name" value="PRK05888.1-3"/>
    <property type="match status" value="1"/>
</dbReference>
<dbReference type="PANTHER" id="PTHR47275">
    <property type="entry name" value="NAD(P)H-QUINONE OXIDOREDUCTASE SUBUNIT I, CHLOROPLASTIC"/>
    <property type="match status" value="1"/>
</dbReference>
<dbReference type="PANTHER" id="PTHR47275:SF1">
    <property type="entry name" value="NAD(P)H-QUINONE OXIDOREDUCTASE SUBUNIT I, CHLOROPLASTIC"/>
    <property type="match status" value="1"/>
</dbReference>
<dbReference type="Pfam" id="PF00037">
    <property type="entry name" value="Fer4"/>
    <property type="match status" value="2"/>
</dbReference>
<dbReference type="SUPFAM" id="SSF54862">
    <property type="entry name" value="4Fe-4S ferredoxins"/>
    <property type="match status" value="1"/>
</dbReference>
<dbReference type="PROSITE" id="PS00198">
    <property type="entry name" value="4FE4S_FER_1"/>
    <property type="match status" value="2"/>
</dbReference>
<dbReference type="PROSITE" id="PS51379">
    <property type="entry name" value="4FE4S_FER_2"/>
    <property type="match status" value="2"/>
</dbReference>
<accession>Q8HVR9</accession>
<sequence>MFPMVTEFMNYGQQTVRAARYIGQGFMITLSHANRLPVTIQYPYEKLITSERFRGRIHFEFDKCIACEVCVRVCPIDLPVVDWKLETDIRKKRLLNYSIDFGICIFCGNCVEYCPTNCLSMTEEYELSTYDRHELNYNQIALGRLPMSIIDNYTIRTILNLPEIKT</sequence>
<proteinExistence type="inferred from homology"/>
<geneLocation type="chloroplast"/>
<name>NDHI_GUATU</name>
<evidence type="ECO:0000255" key="1">
    <source>
        <dbReference type="HAMAP-Rule" id="MF_01351"/>
    </source>
</evidence>